<reference key="1">
    <citation type="submission" date="2004-11" db="EMBL/GenBank/DDBJ databases">
        <authorList>
            <consortium name="The German cDNA consortium"/>
        </authorList>
    </citation>
    <scope>NUCLEOTIDE SEQUENCE [LARGE SCALE MRNA]</scope>
    <source>
        <tissue>Kidney</tissue>
    </source>
</reference>
<dbReference type="EC" id="4.2.1.134" evidence="2"/>
<dbReference type="EMBL" id="CR858641">
    <property type="protein sequence ID" value="CAH90857.1"/>
    <property type="molecule type" value="mRNA"/>
</dbReference>
<dbReference type="RefSeq" id="NP_001125489.1">
    <property type="nucleotide sequence ID" value="NM_001132017.2"/>
</dbReference>
<dbReference type="FunCoup" id="Q5RBK3">
    <property type="interactions" value="1952"/>
</dbReference>
<dbReference type="STRING" id="9601.ENSPPYP00000015068"/>
<dbReference type="GlyCosmos" id="Q5RBK3">
    <property type="glycosylation" value="1 site, No reported glycans"/>
</dbReference>
<dbReference type="Ensembl" id="ENSPPYT00000046269.1">
    <property type="protein sequence ID" value="ENSPPYP00000044289.1"/>
    <property type="gene ID" value="ENSPPYG00000037558.1"/>
</dbReference>
<dbReference type="GeneID" id="100172398"/>
<dbReference type="KEGG" id="pon:100172398"/>
<dbReference type="CTD" id="201562"/>
<dbReference type="eggNOG" id="KOG3187">
    <property type="taxonomic scope" value="Eukaryota"/>
</dbReference>
<dbReference type="GeneTree" id="ENSGT00530000062962"/>
<dbReference type="HOGENOM" id="CLU_034302_2_0_1"/>
<dbReference type="InParanoid" id="Q5RBK3"/>
<dbReference type="OMA" id="SEWWLMY"/>
<dbReference type="OrthoDB" id="46988at2759"/>
<dbReference type="TreeFam" id="TF313326"/>
<dbReference type="UniPathway" id="UPA00094"/>
<dbReference type="Proteomes" id="UP000001595">
    <property type="component" value="Chromosome 3"/>
</dbReference>
<dbReference type="GO" id="GO:0005783">
    <property type="term" value="C:endoplasmic reticulum"/>
    <property type="evidence" value="ECO:0000250"/>
    <property type="project" value="UniProtKB"/>
</dbReference>
<dbReference type="GO" id="GO:0005789">
    <property type="term" value="C:endoplasmic reticulum membrane"/>
    <property type="evidence" value="ECO:0007669"/>
    <property type="project" value="UniProtKB-SubCell"/>
</dbReference>
<dbReference type="GO" id="GO:0019899">
    <property type="term" value="F:enzyme binding"/>
    <property type="evidence" value="ECO:0000250"/>
    <property type="project" value="UniProtKB"/>
</dbReference>
<dbReference type="GO" id="GO:0102158">
    <property type="term" value="F:very-long-chain (3R)-3-hydroxyacyl-CoA dehydratase activity"/>
    <property type="evidence" value="ECO:0000250"/>
    <property type="project" value="UniProtKB"/>
</dbReference>
<dbReference type="GO" id="GO:0030497">
    <property type="term" value="P:fatty acid elongation"/>
    <property type="evidence" value="ECO:0000250"/>
    <property type="project" value="UniProtKB"/>
</dbReference>
<dbReference type="GO" id="GO:0030148">
    <property type="term" value="P:sphingolipid biosynthetic process"/>
    <property type="evidence" value="ECO:0000250"/>
    <property type="project" value="UniProtKB"/>
</dbReference>
<dbReference type="GO" id="GO:0042761">
    <property type="term" value="P:very long-chain fatty acid biosynthetic process"/>
    <property type="evidence" value="ECO:0000250"/>
    <property type="project" value="UniProtKB"/>
</dbReference>
<dbReference type="InterPro" id="IPR007482">
    <property type="entry name" value="Tyr_Pase-like_PTPLA"/>
</dbReference>
<dbReference type="PANTHER" id="PTHR11035">
    <property type="entry name" value="VERY-LONG-CHAIN (3R)-3-HYDROXYACYL-COA DEHYDRATASE"/>
    <property type="match status" value="1"/>
</dbReference>
<dbReference type="PANTHER" id="PTHR11035:SF17">
    <property type="entry name" value="VERY-LONG-CHAIN (3R)-3-HYDROXYACYL-COA DEHYDRATASE 2"/>
    <property type="match status" value="1"/>
</dbReference>
<dbReference type="Pfam" id="PF04387">
    <property type="entry name" value="PTPLA"/>
    <property type="match status" value="1"/>
</dbReference>
<organism>
    <name type="scientific">Pongo abelii</name>
    <name type="common">Sumatran orangutan</name>
    <name type="synonym">Pongo pygmaeus abelii</name>
    <dbReference type="NCBI Taxonomy" id="9601"/>
    <lineage>
        <taxon>Eukaryota</taxon>
        <taxon>Metazoa</taxon>
        <taxon>Chordata</taxon>
        <taxon>Craniata</taxon>
        <taxon>Vertebrata</taxon>
        <taxon>Euteleostomi</taxon>
        <taxon>Mammalia</taxon>
        <taxon>Eutheria</taxon>
        <taxon>Euarchontoglires</taxon>
        <taxon>Primates</taxon>
        <taxon>Haplorrhini</taxon>
        <taxon>Catarrhini</taxon>
        <taxon>Hominidae</taxon>
        <taxon>Pongo</taxon>
    </lineage>
</organism>
<comment type="function">
    <text evidence="2">Catalyzes the third of the very long-chain fatty acids (VLCFA) elongation four-step cycle (condensation, reduction, dehydration, and reduction). This endoplasmic reticulum-elongation process is characterized by the addition of two carbons to the lipid chain through each cycle. This enzyme catalyzes the dehydration of the 3-hydroxyacyl-CoA intermediate into trans-2,3-enoyl-CoA, within each cycle of elongation. Therefore, it participates in the production of various VLCFAs involved in multiple biological processes as precursors of membrane lipids and lipid mediators.</text>
</comment>
<comment type="catalytic activity">
    <reaction evidence="2">
        <text>a very-long-chain (3R)-3-hydroxyacyl-CoA = a very-long-chain (2E)-enoyl-CoA + H2O</text>
        <dbReference type="Rhea" id="RHEA:45812"/>
        <dbReference type="ChEBI" id="CHEBI:15377"/>
        <dbReference type="ChEBI" id="CHEBI:83728"/>
        <dbReference type="ChEBI" id="CHEBI:85440"/>
        <dbReference type="EC" id="4.2.1.134"/>
    </reaction>
    <physiologicalReaction direction="left-to-right" evidence="2">
        <dbReference type="Rhea" id="RHEA:45813"/>
    </physiologicalReaction>
</comment>
<comment type="catalytic activity">
    <reaction evidence="2">
        <text>(3R)-hydroxyhexadecanoyl-CoA = (2E)-hexadecenoyl-CoA + H2O</text>
        <dbReference type="Rhea" id="RHEA:39159"/>
        <dbReference type="ChEBI" id="CHEBI:15377"/>
        <dbReference type="ChEBI" id="CHEBI:61526"/>
        <dbReference type="ChEBI" id="CHEBI:74278"/>
    </reaction>
    <physiologicalReaction direction="left-to-right" evidence="2">
        <dbReference type="Rhea" id="RHEA:39160"/>
    </physiologicalReaction>
</comment>
<comment type="catalytic activity">
    <reaction evidence="2">
        <text>(3R)-hydroxyoctadecanoyl-CoA = (2E)-octadecenoyl-CoA + H2O</text>
        <dbReference type="Rhea" id="RHEA:39155"/>
        <dbReference type="ChEBI" id="CHEBI:15377"/>
        <dbReference type="ChEBI" id="CHEBI:71412"/>
        <dbReference type="ChEBI" id="CHEBI:76374"/>
    </reaction>
    <physiologicalReaction direction="left-to-right" evidence="2">
        <dbReference type="Rhea" id="RHEA:39156"/>
    </physiologicalReaction>
</comment>
<comment type="catalytic activity">
    <reaction evidence="2">
        <text>(3R)-hydroxyeicosanoyl-CoA = (2E)-eicosenoyl-CoA + H2O</text>
        <dbReference type="Rhea" id="RHEA:39175"/>
        <dbReference type="ChEBI" id="CHEBI:15377"/>
        <dbReference type="ChEBI" id="CHEBI:74691"/>
        <dbReference type="ChEBI" id="CHEBI:76373"/>
    </reaction>
    <physiologicalReaction direction="left-to-right" evidence="2">
        <dbReference type="Rhea" id="RHEA:39176"/>
    </physiologicalReaction>
</comment>
<comment type="catalytic activity">
    <reaction evidence="2">
        <text>(3R)-hydroxydocosanoyl-CoA = (2E)-docosenoyl-CoA + H2O</text>
        <dbReference type="Rhea" id="RHEA:39187"/>
        <dbReference type="ChEBI" id="CHEBI:15377"/>
        <dbReference type="ChEBI" id="CHEBI:74692"/>
        <dbReference type="ChEBI" id="CHEBI:76375"/>
    </reaction>
    <physiologicalReaction direction="left-to-right" evidence="2">
        <dbReference type="Rhea" id="RHEA:39188"/>
    </physiologicalReaction>
</comment>
<comment type="catalytic activity">
    <reaction evidence="2">
        <text>(3R)-hydroxytetracosanoyl-CoA = (2E)-tetracosenoyl-CoA + H2O</text>
        <dbReference type="Rhea" id="RHEA:39199"/>
        <dbReference type="ChEBI" id="CHEBI:15377"/>
        <dbReference type="ChEBI" id="CHEBI:74693"/>
        <dbReference type="ChEBI" id="CHEBI:76377"/>
    </reaction>
    <physiologicalReaction direction="left-to-right" evidence="2">
        <dbReference type="Rhea" id="RHEA:39200"/>
    </physiologicalReaction>
</comment>
<comment type="catalytic activity">
    <reaction evidence="2">
        <text>(3R)-hydroxyhexacosanoyl-CoA = (2E)-hexacosenoyl-CoA + H2O</text>
        <dbReference type="Rhea" id="RHEA:39211"/>
        <dbReference type="ChEBI" id="CHEBI:15377"/>
        <dbReference type="ChEBI" id="CHEBI:74281"/>
        <dbReference type="ChEBI" id="CHEBI:76378"/>
    </reaction>
    <physiologicalReaction direction="left-to-right" evidence="2">
        <dbReference type="Rhea" id="RHEA:39212"/>
    </physiologicalReaction>
</comment>
<comment type="pathway">
    <text evidence="2">Lipid metabolism; fatty acid biosynthesis.</text>
</comment>
<comment type="subunit">
    <text evidence="2">May interact with enzymes of the ELO family (including ELOVL1); with those enzymes that mediate condensation, the first of the four steps of the reaction cycle responsible for fatty acids elongation, may be part of a larger fatty acids elongase complex. Interacts with BCAP31 (By similarity). Interacts (via the third lumenal loop) with TECR (By similarity).</text>
</comment>
<comment type="subcellular location">
    <subcellularLocation>
        <location evidence="2">Endoplasmic reticulum membrane</location>
        <topology evidence="2">Multi-pass membrane protein</topology>
    </subcellularLocation>
</comment>
<comment type="similarity">
    <text evidence="5">Belongs to the very long-chain fatty acids dehydratase HACD family.</text>
</comment>
<comment type="caution">
    <text evidence="2">Shares some similarity with tyrosine phosphatase proteins but it has probably no phosphatase activity.</text>
</comment>
<gene>
    <name evidence="5" type="primary">HACD2</name>
    <name evidence="5" type="synonym">PTPLB</name>
</gene>
<protein>
    <recommendedName>
        <fullName evidence="5">Very-long-chain (3R)-3-hydroxyacyl-CoA dehydratase 2</fullName>
        <ecNumber evidence="2">4.2.1.134</ecNumber>
    </recommendedName>
    <alternativeName>
        <fullName evidence="5">3-hydroxyacyl-CoA dehydratase 2</fullName>
        <shortName evidence="5">HACD2</shortName>
    </alternativeName>
    <alternativeName>
        <fullName evidence="5">Protein-tyrosine phosphatase-like member B</fullName>
    </alternativeName>
</protein>
<proteinExistence type="evidence at transcript level"/>
<keyword id="KW-0256">Endoplasmic reticulum</keyword>
<keyword id="KW-0275">Fatty acid biosynthesis</keyword>
<keyword id="KW-0276">Fatty acid metabolism</keyword>
<keyword id="KW-0325">Glycoprotein</keyword>
<keyword id="KW-0444">Lipid biosynthesis</keyword>
<keyword id="KW-0443">Lipid metabolism</keyword>
<keyword id="KW-0456">Lyase</keyword>
<keyword id="KW-0472">Membrane</keyword>
<keyword id="KW-1185">Reference proteome</keyword>
<keyword id="KW-0812">Transmembrane</keyword>
<keyword id="KW-1133">Transmembrane helix</keyword>
<accession>Q5RBK3</accession>
<evidence type="ECO:0000250" key="1">
    <source>
        <dbReference type="UniProtKB" id="P40857"/>
    </source>
</evidence>
<evidence type="ECO:0000250" key="2">
    <source>
        <dbReference type="UniProtKB" id="Q6Y1H2"/>
    </source>
</evidence>
<evidence type="ECO:0000255" key="3"/>
<evidence type="ECO:0000256" key="4">
    <source>
        <dbReference type="SAM" id="MobiDB-lite"/>
    </source>
</evidence>
<evidence type="ECO:0000305" key="5"/>
<feature type="chain" id="PRO_0000349321" description="Very-long-chain (3R)-3-hydroxyacyl-CoA dehydratase 2">
    <location>
        <begin position="1"/>
        <end position="255"/>
    </location>
</feature>
<feature type="topological domain" description="Cytoplasmic" evidence="3">
    <location>
        <begin position="3"/>
        <end position="42"/>
    </location>
</feature>
<feature type="transmembrane region" description="Helical" evidence="3">
    <location>
        <begin position="43"/>
        <end position="61"/>
    </location>
</feature>
<feature type="topological domain" description="Lumenal" evidence="3">
    <location>
        <begin position="62"/>
        <end position="80"/>
    </location>
</feature>
<feature type="transmembrane region" description="Helical" evidence="3">
    <location>
        <begin position="81"/>
        <end position="98"/>
    </location>
</feature>
<feature type="topological domain" description="Cytoplasmic" evidence="3">
    <location>
        <begin position="99"/>
        <end position="108"/>
    </location>
</feature>
<feature type="transmembrane region" description="Helical" evidence="3">
    <location>
        <begin position="109"/>
        <end position="126"/>
    </location>
</feature>
<feature type="topological domain" description="Lumenal" evidence="3">
    <location>
        <begin position="127"/>
        <end position="131"/>
    </location>
</feature>
<feature type="transmembrane region" description="Helical" evidence="3">
    <location>
        <begin position="132"/>
        <end position="147"/>
    </location>
</feature>
<feature type="topological domain" description="Cytoplasmic" evidence="3">
    <location>
        <begin position="148"/>
        <end position="170"/>
    </location>
</feature>
<feature type="transmembrane region" description="Helical" evidence="3">
    <location>
        <begin position="171"/>
        <end position="188"/>
    </location>
</feature>
<feature type="topological domain" description="Lumenal" evidence="3">
    <location>
        <begin position="189"/>
        <end position="218"/>
    </location>
</feature>
<feature type="transmembrane region" description="Helical" evidence="3">
    <location>
        <begin position="219"/>
        <end position="236"/>
    </location>
</feature>
<feature type="topological domain" description="Cytoplasmic" evidence="3">
    <location>
        <begin position="237"/>
        <end position="255"/>
    </location>
</feature>
<feature type="region of interest" description="Disordered" evidence="4">
    <location>
        <begin position="11"/>
        <end position="34"/>
    </location>
</feature>
<feature type="region of interest" description="May be involved in interaction with TECR" evidence="2">
    <location>
        <begin position="199"/>
        <end position="215"/>
    </location>
</feature>
<feature type="compositionally biased region" description="Gly residues" evidence="4">
    <location>
        <begin position="13"/>
        <end position="22"/>
    </location>
</feature>
<feature type="active site" evidence="1">
    <location>
        <position position="177"/>
    </location>
</feature>
<feature type="active site" evidence="1">
    <location>
        <position position="184"/>
    </location>
</feature>
<feature type="glycosylation site" description="N-linked (GlcNAc...) asparagine" evidence="3">
    <location>
        <position position="210"/>
    </location>
</feature>
<name>HACD2_PONAB</name>
<sequence length="255" mass="28411">MAAAAAATAAAKGNGGGGGRAGAGDASGTRKKKGPGPLATAYLVIYNVVMTAGWLVIAVGLVRAYLAKGSYHSLYYSIEKPLKFFQTGALLEILHCAIGIVPSSVVLTSFQVMSRVFLIWAVTHSVKEVQSEDSVLLFVIAWTITEIIRYSFYTFSLLNHLPYLIKWARYTLFIVLYPMGVSGELLTIYAALPFVRQAGLYSISLPNKYNFSFDYYAFLILIMISYIPIFPQLYFHMIHQRRKILSHTEEHKKFE</sequence>